<reference key="1">
    <citation type="journal article" date="1992" name="Insect Biochem. Mol. Biol.">
        <title>Cloning of a Locusta cDNA encoding neuroparsin A.</title>
        <authorList>
            <person name="Lagueux M."/>
            <person name="Kromer E."/>
            <person name="Girardie J."/>
        </authorList>
    </citation>
    <scope>NUCLEOTIDE SEQUENCE [MRNA]</scope>
    <scope>PARTIAL PROTEIN SEQUENCE</scope>
    <source>
        <tissue>Brain</tissue>
    </source>
</reference>
<reference key="2">
    <citation type="journal article" date="1990" name="Insect Biochem.">
        <title>The locust neuroparsin A: sequence and similarities with vertebrate and insect polypeptide hormones.</title>
        <authorList>
            <person name="Girardie J."/>
            <person name="Huet J.-C."/>
            <person name="Pernollet J.-C."/>
        </authorList>
    </citation>
    <scope>PROTEIN SEQUENCE OF 25-107</scope>
</reference>
<reference key="3">
    <citation type="journal article" date="1989" name="FEBS Lett.">
        <title>Amino acid sequence of locust neuroparsins.</title>
        <authorList>
            <person name="Girardie J."/>
            <person name="Girardie A."/>
            <person name="Huet J.-C."/>
            <person name="Pernollet J.-C."/>
        </authorList>
    </citation>
    <scope>PROTEIN SEQUENCE OF 30-107</scope>
    <source>
        <tissue>Neuropora cardiaca</tissue>
    </source>
</reference>
<evidence type="ECO:0000269" key="1">
    <source ref="2"/>
</evidence>
<dbReference type="EMBL" id="Y17710">
    <property type="protein sequence ID" value="CAA76829.1"/>
    <property type="molecule type" value="mRNA"/>
</dbReference>
<dbReference type="PIR" id="A61618">
    <property type="entry name" value="A60361"/>
</dbReference>
<dbReference type="GO" id="GO:0005179">
    <property type="term" value="F:hormone activity"/>
    <property type="evidence" value="ECO:0007669"/>
    <property type="project" value="UniProtKB-KW"/>
</dbReference>
<dbReference type="GO" id="GO:0007218">
    <property type="term" value="P:neuropeptide signaling pathway"/>
    <property type="evidence" value="ECO:0007669"/>
    <property type="project" value="UniProtKB-KW"/>
</dbReference>
<dbReference type="Gene3D" id="4.10.40.20">
    <property type="match status" value="1"/>
</dbReference>
<dbReference type="InterPro" id="IPR010850">
    <property type="entry name" value="Neuroparsin"/>
</dbReference>
<dbReference type="Pfam" id="PF07327">
    <property type="entry name" value="Neuroparsin"/>
    <property type="match status" value="1"/>
</dbReference>
<dbReference type="PIRSF" id="PIRSF001836">
    <property type="entry name" value="Neuroparsin"/>
    <property type="match status" value="1"/>
</dbReference>
<keyword id="KW-0903">Direct protein sequencing</keyword>
<keyword id="KW-1015">Disulfide bond</keyword>
<keyword id="KW-0372">Hormone</keyword>
<keyword id="KW-0527">Neuropeptide</keyword>
<keyword id="KW-0732">Signal</keyword>
<name>NPAB_LOCMI</name>
<accession>P10776</accession>
<comment type="function">
    <text>Neurosparins are multifunctional neurohormones: they inhibit the effects of juvenile hormone, stimulate fluid reabsorption of isolated recta and induces an increase in hemolymph lipid and trehalose levels.</text>
</comment>
<comment type="subunit">
    <text>Homodimer; disulfide-linked.</text>
</comment>
<organism>
    <name type="scientific">Locusta migratoria</name>
    <name type="common">Migratory locust</name>
    <dbReference type="NCBI Taxonomy" id="7004"/>
    <lineage>
        <taxon>Eukaryota</taxon>
        <taxon>Metazoa</taxon>
        <taxon>Ecdysozoa</taxon>
        <taxon>Arthropoda</taxon>
        <taxon>Hexapoda</taxon>
        <taxon>Insecta</taxon>
        <taxon>Pterygota</taxon>
        <taxon>Neoptera</taxon>
        <taxon>Polyneoptera</taxon>
        <taxon>Orthoptera</taxon>
        <taxon>Caelifera</taxon>
        <taxon>Acrididea</taxon>
        <taxon>Acridomorpha</taxon>
        <taxon>Acridoidea</taxon>
        <taxon>Acrididae</taxon>
        <taxon>Oedipodinae</taxon>
        <taxon>Locusta</taxon>
    </lineage>
</organism>
<sequence length="107" mass="11315">MKATAALVAATLLLAVTLFHRAERNPISRSCEGANCVVDLTRCEYGDVTDFFGRKVCAKGPGDKCGGPYELHGKCGVGMDCRCGLCSGCSLHNLQCFFFEGGLPSSC</sequence>
<protein>
    <recommendedName>
        <fullName>Neuroparsin-A</fullName>
        <shortName>NPA</shortName>
    </recommendedName>
    <component>
        <recommendedName>
            <fullName>Neuroparsin-B</fullName>
            <shortName>NPB</shortName>
        </recommendedName>
    </component>
</protein>
<proteinExistence type="evidence at protein level"/>
<feature type="signal peptide">
    <location>
        <begin position="1"/>
        <end position="22"/>
    </location>
</feature>
<feature type="propeptide" id="PRO_0000021827" evidence="1">
    <location>
        <begin position="23"/>
        <end position="24"/>
    </location>
</feature>
<feature type="peptide" id="PRO_0000021828" description="Neuroparsin-A">
    <location>
        <begin position="25"/>
        <end position="107"/>
    </location>
</feature>
<feature type="peptide" id="PRO_0000021829" description="Neuroparsin-B">
    <location>
        <begin position="30"/>
        <end position="107"/>
    </location>
</feature>